<gene>
    <name evidence="4" type="primary">CYP94D108</name>
</gene>
<comment type="function">
    <text evidence="3">Involved in the biosynthesis of spiroketal steroid and saponin natural products from cholesterol such as diosgenin and analogs (e.g. furostanol and spirostanol), plant defense compounds used as main precursors for the industrial production of steroid hormones (PubMed:31324795). During the 5,6-spiroketalization of cholesterol, may catalyze the 27-monohydroxylation of furostanol-type steroid to an intermediate product that undergoes a stereospecific formation of the terminal heterocycle to yield diosgenin (PubMed:31324795).</text>
</comment>
<comment type="pathway">
    <text evidence="3">Steroid metabolism; cholesterol metabolism.</text>
</comment>
<comment type="subcellular location">
    <subcellularLocation>
        <location evidence="2">Membrane</location>
        <topology evidence="2">Single-pass membrane protein</topology>
    </subcellularLocation>
</comment>
<comment type="tissue specificity">
    <text evidence="3">Mainly expressed in roots and, at low levels, in leaves, fruits and stems.</text>
</comment>
<comment type="biotechnology">
    <text evidence="3">The coexpression of CYP90G4 and CYP94D108 in the yeast strain RH6829, which was engineered to accumulate cholesterol, leads to the production of diosgenin, the main precursor for the industrial production of steroid hormones.</text>
</comment>
<comment type="similarity">
    <text evidence="5">Belongs to the cytochrome P450 family.</text>
</comment>
<dbReference type="EC" id="1.14.14.-" evidence="3"/>
<dbReference type="EMBL" id="MK636703">
    <property type="protein sequence ID" value="QDS03629.1"/>
    <property type="molecule type" value="mRNA"/>
</dbReference>
<dbReference type="SMR" id="A0A517FNC7"/>
<dbReference type="UniPathway" id="UPA00296"/>
<dbReference type="GO" id="GO:0016020">
    <property type="term" value="C:membrane"/>
    <property type="evidence" value="ECO:0007669"/>
    <property type="project" value="UniProtKB-SubCell"/>
</dbReference>
<dbReference type="GO" id="GO:0020037">
    <property type="term" value="F:heme binding"/>
    <property type="evidence" value="ECO:0007669"/>
    <property type="project" value="InterPro"/>
</dbReference>
<dbReference type="GO" id="GO:0005506">
    <property type="term" value="F:iron ion binding"/>
    <property type="evidence" value="ECO:0007669"/>
    <property type="project" value="InterPro"/>
</dbReference>
<dbReference type="GO" id="GO:0004497">
    <property type="term" value="F:monooxygenase activity"/>
    <property type="evidence" value="ECO:0007669"/>
    <property type="project" value="UniProtKB-KW"/>
</dbReference>
<dbReference type="GO" id="GO:0016705">
    <property type="term" value="F:oxidoreductase activity, acting on paired donors, with incorporation or reduction of molecular oxygen"/>
    <property type="evidence" value="ECO:0000314"/>
    <property type="project" value="UniProtKB"/>
</dbReference>
<dbReference type="GO" id="GO:0008203">
    <property type="term" value="P:cholesterol metabolic process"/>
    <property type="evidence" value="ECO:0000314"/>
    <property type="project" value="UniProtKB"/>
</dbReference>
<dbReference type="GO" id="GO:0016135">
    <property type="term" value="P:saponin biosynthetic process"/>
    <property type="evidence" value="ECO:0000314"/>
    <property type="project" value="UniProtKB"/>
</dbReference>
<dbReference type="GO" id="GO:0006694">
    <property type="term" value="P:steroid biosynthetic process"/>
    <property type="evidence" value="ECO:0000314"/>
    <property type="project" value="UniProtKB"/>
</dbReference>
<dbReference type="CDD" id="cd11064">
    <property type="entry name" value="CYP86A"/>
    <property type="match status" value="1"/>
</dbReference>
<dbReference type="Gene3D" id="1.10.630.10">
    <property type="entry name" value="Cytochrome P450"/>
    <property type="match status" value="1"/>
</dbReference>
<dbReference type="InterPro" id="IPR001128">
    <property type="entry name" value="Cyt_P450"/>
</dbReference>
<dbReference type="InterPro" id="IPR017972">
    <property type="entry name" value="Cyt_P450_CS"/>
</dbReference>
<dbReference type="InterPro" id="IPR002401">
    <property type="entry name" value="Cyt_P450_E_grp-I"/>
</dbReference>
<dbReference type="InterPro" id="IPR036396">
    <property type="entry name" value="Cyt_P450_sf"/>
</dbReference>
<dbReference type="PANTHER" id="PTHR24296">
    <property type="entry name" value="CYTOCHROME P450"/>
    <property type="match status" value="1"/>
</dbReference>
<dbReference type="Pfam" id="PF00067">
    <property type="entry name" value="p450"/>
    <property type="match status" value="1"/>
</dbReference>
<dbReference type="PRINTS" id="PR00463">
    <property type="entry name" value="EP450I"/>
</dbReference>
<dbReference type="PRINTS" id="PR00385">
    <property type="entry name" value="P450"/>
</dbReference>
<dbReference type="SUPFAM" id="SSF48264">
    <property type="entry name" value="Cytochrome P450"/>
    <property type="match status" value="1"/>
</dbReference>
<dbReference type="PROSITE" id="PS00086">
    <property type="entry name" value="CYTOCHROME_P450"/>
    <property type="match status" value="1"/>
</dbReference>
<organism>
    <name type="scientific">Paris polyphylla</name>
    <name type="common">Daiswa polyphylla</name>
    <dbReference type="NCBI Taxonomy" id="49666"/>
    <lineage>
        <taxon>Eukaryota</taxon>
        <taxon>Viridiplantae</taxon>
        <taxon>Streptophyta</taxon>
        <taxon>Embryophyta</taxon>
        <taxon>Tracheophyta</taxon>
        <taxon>Spermatophyta</taxon>
        <taxon>Magnoliopsida</taxon>
        <taxon>Liliopsida</taxon>
        <taxon>Liliales</taxon>
        <taxon>Melanthiaceae</taxon>
        <taxon>Paris</taxon>
    </lineage>
</organism>
<reference key="1">
    <citation type="journal article" date="2019" name="Nat. Commun.">
        <title>Repeated evolution of cytochrome P450-mediated spiroketal steroid biosynthesis in plants.</title>
        <authorList>
            <person name="Christ B."/>
            <person name="Xu C."/>
            <person name="Xu M."/>
            <person name="Li F.-S."/>
            <person name="Wada N."/>
            <person name="Mitchell A.J."/>
            <person name="Han X.-L."/>
            <person name="Wen M.-L."/>
            <person name="Fujita M."/>
            <person name="Weng J.-K."/>
        </authorList>
    </citation>
    <scope>NUCLEOTIDE SEQUENCE [MRNA]</scope>
    <scope>FUNCTION</scope>
    <scope>CATALYTIC ACTIVITY</scope>
    <scope>PATHWAY</scope>
    <scope>BIOTECHNOLOGY</scope>
    <scope>TISSUE SPECIFICITY</scope>
    <source>
        <tissue>Fruit</tissue>
        <tissue>Leaf</tissue>
        <tissue>Root</tissue>
        <tissue>Stem</tissue>
    </source>
</reference>
<evidence type="ECO:0000250" key="1">
    <source>
        <dbReference type="UniProtKB" id="P04798"/>
    </source>
</evidence>
<evidence type="ECO:0000255" key="2"/>
<evidence type="ECO:0000269" key="3">
    <source>
    </source>
</evidence>
<evidence type="ECO:0000303" key="4">
    <source>
    </source>
</evidence>
<evidence type="ECO:0000305" key="5"/>
<keyword id="KW-0153">Cholesterol metabolism</keyword>
<keyword id="KW-0349">Heme</keyword>
<keyword id="KW-0408">Iron</keyword>
<keyword id="KW-0444">Lipid biosynthesis</keyword>
<keyword id="KW-0443">Lipid metabolism</keyword>
<keyword id="KW-0472">Membrane</keyword>
<keyword id="KW-0479">Metal-binding</keyword>
<keyword id="KW-0503">Monooxygenase</keyword>
<keyword id="KW-0560">Oxidoreductase</keyword>
<keyword id="KW-0752">Steroid biosynthesis</keyword>
<keyword id="KW-0753">Steroid metabolism</keyword>
<keyword id="KW-1207">Sterol metabolism</keyword>
<keyword id="KW-0812">Transmembrane</keyword>
<keyword id="KW-1133">Transmembrane helix</keyword>
<protein>
    <recommendedName>
        <fullName evidence="4">Cytochrome P450 CYP94D108</fullName>
        <shortName evidence="4">PpCYP94D108</shortName>
        <ecNumber evidence="3">1.14.14.-</ecNumber>
    </recommendedName>
</protein>
<name>94D18_PARPY</name>
<feature type="chain" id="PRO_5022045864" description="Cytochrome P450 CYP94D108">
    <location>
        <begin position="1"/>
        <end position="497"/>
    </location>
</feature>
<feature type="transmembrane region" description="Helical" evidence="2">
    <location>
        <begin position="6"/>
        <end position="26"/>
    </location>
</feature>
<feature type="binding site" description="axial binding residue" evidence="1">
    <location>
        <position position="439"/>
    </location>
    <ligand>
        <name>heme</name>
        <dbReference type="ChEBI" id="CHEBI:30413"/>
    </ligand>
    <ligandPart>
        <name>Fe</name>
        <dbReference type="ChEBI" id="CHEBI:18248"/>
    </ligandPart>
</feature>
<proteinExistence type="evidence at protein level"/>
<accession>A0A517FNC7</accession>
<sequence>MDPPSLLSLALLLLAAAAAAAFVLFPRRRSPEKKPSSGNPGSLSELIKNGHRILDWMVEILAASPTNTVATYMGVVTANPANVEHMLKTKFENYPKGDRFVTLLEDFLGRGIFNSDGDHWKLQRKTASLEFNTKTIRTFVMENVRVSVVDRLIPIFARAAASGETIDLQETLERFAFDNVCKVSFNEDTGRLSGDDTMEGREFARAFEQASELIVGRYKHPFLLSWKLMRFFNIGDERRLKEKIATVHRFATSVIRRRKSAASLGDDLLSRFIAEADYPDEFLRDIIISFVLAGRDTTSATLTWFFWLASTRPEVLARVEAEVNAVRRKNGTCAGVMFTLEEVREMDFLHAALSEALRLYPPVPLQTRACHESDEFPDGTKVRPGTTVMYNSYAMGRMKSIWGEDYAEFRPERWLDKGGGFQPRSPFRFPVFHAGPRMCLGKEMAYIQMKAVAASVVERFEVVVMDKEKVREKDYTMILRVKGGLPVRLKEKSVAAG</sequence>